<reference key="1">
    <citation type="journal article" date="2009" name="ISME J.">
        <title>The genome sequence of the psychrophilic archaeon, Methanococcoides burtonii: the role of genome evolution in cold adaptation.</title>
        <authorList>
            <person name="Allen M.A."/>
            <person name="Lauro F.M."/>
            <person name="Williams T.J."/>
            <person name="Burg D."/>
            <person name="Siddiqui K.S."/>
            <person name="De Francisci D."/>
            <person name="Chong K.W."/>
            <person name="Pilak O."/>
            <person name="Chew H.H."/>
            <person name="De Maere M.Z."/>
            <person name="Ting L."/>
            <person name="Katrib M."/>
            <person name="Ng C."/>
            <person name="Sowers K.R."/>
            <person name="Galperin M.Y."/>
            <person name="Anderson I.J."/>
            <person name="Ivanova N."/>
            <person name="Dalin E."/>
            <person name="Martinez M."/>
            <person name="Lapidus A."/>
            <person name="Hauser L."/>
            <person name="Land M."/>
            <person name="Thomas T."/>
            <person name="Cavicchioli R."/>
        </authorList>
    </citation>
    <scope>NUCLEOTIDE SEQUENCE [LARGE SCALE GENOMIC DNA]</scope>
    <source>
        <strain>DSM 6242 / NBRC 107633 / OCM 468 / ACE-M</strain>
    </source>
</reference>
<accession>Q12UV8</accession>
<name>HIS2_METBU</name>
<keyword id="KW-0028">Amino-acid biosynthesis</keyword>
<keyword id="KW-0067">ATP-binding</keyword>
<keyword id="KW-0963">Cytoplasm</keyword>
<keyword id="KW-0368">Histidine biosynthesis</keyword>
<keyword id="KW-0378">Hydrolase</keyword>
<keyword id="KW-0547">Nucleotide-binding</keyword>
<comment type="catalytic activity">
    <reaction evidence="1">
        <text>1-(5-phospho-beta-D-ribosyl)-ATP + H2O = 1-(5-phospho-beta-D-ribosyl)-5'-AMP + diphosphate + H(+)</text>
        <dbReference type="Rhea" id="RHEA:22828"/>
        <dbReference type="ChEBI" id="CHEBI:15377"/>
        <dbReference type="ChEBI" id="CHEBI:15378"/>
        <dbReference type="ChEBI" id="CHEBI:33019"/>
        <dbReference type="ChEBI" id="CHEBI:59457"/>
        <dbReference type="ChEBI" id="CHEBI:73183"/>
        <dbReference type="EC" id="3.6.1.31"/>
    </reaction>
</comment>
<comment type="pathway">
    <text evidence="1">Amino-acid biosynthesis; L-histidine biosynthesis; L-histidine from 5-phospho-alpha-D-ribose 1-diphosphate: step 2/9.</text>
</comment>
<comment type="subcellular location">
    <subcellularLocation>
        <location evidence="1">Cytoplasm</location>
    </subcellularLocation>
</comment>
<comment type="similarity">
    <text evidence="1">Belongs to the PRA-PH family.</text>
</comment>
<evidence type="ECO:0000255" key="1">
    <source>
        <dbReference type="HAMAP-Rule" id="MF_01020"/>
    </source>
</evidence>
<proteinExistence type="inferred from homology"/>
<gene>
    <name evidence="1" type="primary">hisE</name>
    <name type="ordered locus">Mbur_1885</name>
</gene>
<sequence>MTDADMSVLNEVFDVIMDRKNNPVEGSYVCSLLDHRKGINKILEKVGEETAETILAVKDNDRAEIIYETSDLLFHLLVMLAATDITLDDIAEEMKKRRH</sequence>
<organism>
    <name type="scientific">Methanococcoides burtonii (strain DSM 6242 / NBRC 107633 / OCM 468 / ACE-M)</name>
    <dbReference type="NCBI Taxonomy" id="259564"/>
    <lineage>
        <taxon>Archaea</taxon>
        <taxon>Methanobacteriati</taxon>
        <taxon>Methanobacteriota</taxon>
        <taxon>Stenosarchaea group</taxon>
        <taxon>Methanomicrobia</taxon>
        <taxon>Methanosarcinales</taxon>
        <taxon>Methanosarcinaceae</taxon>
        <taxon>Methanococcoides</taxon>
    </lineage>
</organism>
<dbReference type="EC" id="3.6.1.31" evidence="1"/>
<dbReference type="EMBL" id="CP000300">
    <property type="protein sequence ID" value="ABE52768.1"/>
    <property type="molecule type" value="Genomic_DNA"/>
</dbReference>
<dbReference type="RefSeq" id="WP_011499911.1">
    <property type="nucleotide sequence ID" value="NC_007955.1"/>
</dbReference>
<dbReference type="SMR" id="Q12UV8"/>
<dbReference type="STRING" id="259564.Mbur_1885"/>
<dbReference type="GeneID" id="3997677"/>
<dbReference type="KEGG" id="mbu:Mbur_1885"/>
<dbReference type="HOGENOM" id="CLU_123337_0_0_2"/>
<dbReference type="OrthoDB" id="39686at2157"/>
<dbReference type="UniPathway" id="UPA00031">
    <property type="reaction ID" value="UER00007"/>
</dbReference>
<dbReference type="Proteomes" id="UP000001979">
    <property type="component" value="Chromosome"/>
</dbReference>
<dbReference type="GO" id="GO:0005737">
    <property type="term" value="C:cytoplasm"/>
    <property type="evidence" value="ECO:0007669"/>
    <property type="project" value="UniProtKB-SubCell"/>
</dbReference>
<dbReference type="GO" id="GO:0005524">
    <property type="term" value="F:ATP binding"/>
    <property type="evidence" value="ECO:0007669"/>
    <property type="project" value="UniProtKB-KW"/>
</dbReference>
<dbReference type="GO" id="GO:0004636">
    <property type="term" value="F:phosphoribosyl-ATP diphosphatase activity"/>
    <property type="evidence" value="ECO:0007669"/>
    <property type="project" value="UniProtKB-UniRule"/>
</dbReference>
<dbReference type="GO" id="GO:0000105">
    <property type="term" value="P:L-histidine biosynthetic process"/>
    <property type="evidence" value="ECO:0007669"/>
    <property type="project" value="UniProtKB-UniRule"/>
</dbReference>
<dbReference type="CDD" id="cd11534">
    <property type="entry name" value="NTP-PPase_HisIE_like"/>
    <property type="match status" value="1"/>
</dbReference>
<dbReference type="Gene3D" id="1.10.287.1080">
    <property type="entry name" value="MazG-like"/>
    <property type="match status" value="1"/>
</dbReference>
<dbReference type="HAMAP" id="MF_01020">
    <property type="entry name" value="HisE"/>
    <property type="match status" value="1"/>
</dbReference>
<dbReference type="InterPro" id="IPR008179">
    <property type="entry name" value="HisE"/>
</dbReference>
<dbReference type="InterPro" id="IPR021130">
    <property type="entry name" value="PRib-ATP_PPHydrolase-like"/>
</dbReference>
<dbReference type="NCBIfam" id="TIGR03188">
    <property type="entry name" value="histidine_hisI"/>
    <property type="match status" value="1"/>
</dbReference>
<dbReference type="NCBIfam" id="NF001611">
    <property type="entry name" value="PRK00400.1-3"/>
    <property type="match status" value="1"/>
</dbReference>
<dbReference type="PANTHER" id="PTHR42945">
    <property type="entry name" value="HISTIDINE BIOSYNTHESIS BIFUNCTIONAL PROTEIN"/>
    <property type="match status" value="1"/>
</dbReference>
<dbReference type="PANTHER" id="PTHR42945:SF9">
    <property type="entry name" value="HISTIDINE BIOSYNTHESIS BIFUNCTIONAL PROTEIN HISIE"/>
    <property type="match status" value="1"/>
</dbReference>
<dbReference type="Pfam" id="PF01503">
    <property type="entry name" value="PRA-PH"/>
    <property type="match status" value="1"/>
</dbReference>
<dbReference type="SUPFAM" id="SSF101386">
    <property type="entry name" value="all-alpha NTP pyrophosphatases"/>
    <property type="match status" value="1"/>
</dbReference>
<feature type="chain" id="PRO_1000063348" description="Phosphoribosyl-ATP pyrophosphatase">
    <location>
        <begin position="1"/>
        <end position="99"/>
    </location>
</feature>
<protein>
    <recommendedName>
        <fullName evidence="1">Phosphoribosyl-ATP pyrophosphatase</fullName>
        <shortName evidence="1">PRA-PH</shortName>
        <ecNumber evidence="1">3.6.1.31</ecNumber>
    </recommendedName>
</protein>